<dbReference type="EC" id="2.7.7.38" evidence="1"/>
<dbReference type="EMBL" id="AJ235271">
    <property type="protein sequence ID" value="CAA14838.1"/>
    <property type="molecule type" value="Genomic_DNA"/>
</dbReference>
<dbReference type="PIR" id="D71695">
    <property type="entry name" value="D71695"/>
</dbReference>
<dbReference type="RefSeq" id="NP_220762.1">
    <property type="nucleotide sequence ID" value="NC_000963.1"/>
</dbReference>
<dbReference type="RefSeq" id="WP_004599440.1">
    <property type="nucleotide sequence ID" value="NC_000963.1"/>
</dbReference>
<dbReference type="SMR" id="Q9ZDF0"/>
<dbReference type="STRING" id="272947.gene:17555459"/>
<dbReference type="EnsemblBacteria" id="CAA14838">
    <property type="protein sequence ID" value="CAA14838"/>
    <property type="gene ID" value="CAA14838"/>
</dbReference>
<dbReference type="KEGG" id="rpr:RP379"/>
<dbReference type="PATRIC" id="fig|272947.5.peg.391"/>
<dbReference type="eggNOG" id="COG1212">
    <property type="taxonomic scope" value="Bacteria"/>
</dbReference>
<dbReference type="HOGENOM" id="CLU_065038_0_1_5"/>
<dbReference type="OrthoDB" id="9815559at2"/>
<dbReference type="UniPathway" id="UPA00030"/>
<dbReference type="UniPathway" id="UPA00358">
    <property type="reaction ID" value="UER00476"/>
</dbReference>
<dbReference type="Proteomes" id="UP000002480">
    <property type="component" value="Chromosome"/>
</dbReference>
<dbReference type="GO" id="GO:0005829">
    <property type="term" value="C:cytosol"/>
    <property type="evidence" value="ECO:0007669"/>
    <property type="project" value="TreeGrafter"/>
</dbReference>
<dbReference type="GO" id="GO:0008690">
    <property type="term" value="F:3-deoxy-manno-octulosonate cytidylyltransferase activity"/>
    <property type="evidence" value="ECO:0007669"/>
    <property type="project" value="UniProtKB-UniRule"/>
</dbReference>
<dbReference type="GO" id="GO:0033468">
    <property type="term" value="P:CMP-keto-3-deoxy-D-manno-octulosonic acid biosynthetic process"/>
    <property type="evidence" value="ECO:0007669"/>
    <property type="project" value="UniProtKB-UniRule"/>
</dbReference>
<dbReference type="GO" id="GO:0009103">
    <property type="term" value="P:lipopolysaccharide biosynthetic process"/>
    <property type="evidence" value="ECO:0007669"/>
    <property type="project" value="UniProtKB-UniRule"/>
</dbReference>
<dbReference type="CDD" id="cd02517">
    <property type="entry name" value="CMP-KDO-Synthetase"/>
    <property type="match status" value="1"/>
</dbReference>
<dbReference type="Gene3D" id="3.90.550.10">
    <property type="entry name" value="Spore Coat Polysaccharide Biosynthesis Protein SpsA, Chain A"/>
    <property type="match status" value="1"/>
</dbReference>
<dbReference type="HAMAP" id="MF_00057">
    <property type="entry name" value="KdsB"/>
    <property type="match status" value="1"/>
</dbReference>
<dbReference type="InterPro" id="IPR003329">
    <property type="entry name" value="Cytidylyl_trans"/>
</dbReference>
<dbReference type="InterPro" id="IPR004528">
    <property type="entry name" value="KdsB"/>
</dbReference>
<dbReference type="InterPro" id="IPR029044">
    <property type="entry name" value="Nucleotide-diphossugar_trans"/>
</dbReference>
<dbReference type="NCBIfam" id="TIGR00466">
    <property type="entry name" value="kdsB"/>
    <property type="match status" value="1"/>
</dbReference>
<dbReference type="NCBIfam" id="NF003948">
    <property type="entry name" value="PRK05450.1-1"/>
    <property type="match status" value="1"/>
</dbReference>
<dbReference type="NCBIfam" id="NF003952">
    <property type="entry name" value="PRK05450.1-5"/>
    <property type="match status" value="1"/>
</dbReference>
<dbReference type="PANTHER" id="PTHR42866">
    <property type="entry name" value="3-DEOXY-MANNO-OCTULOSONATE CYTIDYLYLTRANSFERASE"/>
    <property type="match status" value="1"/>
</dbReference>
<dbReference type="PANTHER" id="PTHR42866:SF2">
    <property type="entry name" value="3-DEOXY-MANNO-OCTULOSONATE CYTIDYLYLTRANSFERASE, MITOCHONDRIAL"/>
    <property type="match status" value="1"/>
</dbReference>
<dbReference type="Pfam" id="PF02348">
    <property type="entry name" value="CTP_transf_3"/>
    <property type="match status" value="1"/>
</dbReference>
<dbReference type="SUPFAM" id="SSF53448">
    <property type="entry name" value="Nucleotide-diphospho-sugar transferases"/>
    <property type="match status" value="1"/>
</dbReference>
<accession>Q9ZDF0</accession>
<feature type="chain" id="PRO_0000188514" description="3-deoxy-manno-octulosonate cytidylyltransferase">
    <location>
        <begin position="1"/>
        <end position="246"/>
    </location>
</feature>
<name>KDSB_RICPR</name>
<keyword id="KW-0963">Cytoplasm</keyword>
<keyword id="KW-0448">Lipopolysaccharide biosynthesis</keyword>
<keyword id="KW-0548">Nucleotidyltransferase</keyword>
<keyword id="KW-1185">Reference proteome</keyword>
<keyword id="KW-0808">Transferase</keyword>
<comment type="function">
    <text evidence="1">Activates KDO (a required 8-carbon sugar) for incorporation into bacterial lipopolysaccharide in Gram-negative bacteria.</text>
</comment>
<comment type="catalytic activity">
    <reaction evidence="1">
        <text>3-deoxy-alpha-D-manno-oct-2-ulosonate + CTP = CMP-3-deoxy-beta-D-manno-octulosonate + diphosphate</text>
        <dbReference type="Rhea" id="RHEA:23448"/>
        <dbReference type="ChEBI" id="CHEBI:33019"/>
        <dbReference type="ChEBI" id="CHEBI:37563"/>
        <dbReference type="ChEBI" id="CHEBI:85986"/>
        <dbReference type="ChEBI" id="CHEBI:85987"/>
        <dbReference type="EC" id="2.7.7.38"/>
    </reaction>
</comment>
<comment type="pathway">
    <text evidence="1">Nucleotide-sugar biosynthesis; CMP-3-deoxy-D-manno-octulosonate biosynthesis; CMP-3-deoxy-D-manno-octulosonate from 3-deoxy-D-manno-octulosonate and CTP: step 1/1.</text>
</comment>
<comment type="pathway">
    <text evidence="1">Bacterial outer membrane biogenesis; lipopolysaccharide biosynthesis.</text>
</comment>
<comment type="subcellular location">
    <subcellularLocation>
        <location evidence="1">Cytoplasm</location>
    </subcellularLocation>
</comment>
<comment type="similarity">
    <text evidence="1">Belongs to the KdsB family.</text>
</comment>
<gene>
    <name evidence="1" type="primary">kdsB</name>
    <name type="ordered locus">RP379</name>
</gene>
<sequence>MKNQDVAIIIPSRLNSTRLIQKPLQLIGSITLIERVFQQVNKANIHHTYVATDSEEIANVIKKISGKVIFTDSNIPTGTDRAYEAFKLIPNNHNIHYIINVQGDIPFIEHRSILKIIEYLKNSEYDIVTPVVKVDRESIEDSSNVTVAVDYTGKALYFSRSPIPHGAEEFLYHLGIYGFRKNALEKFVSLKQTFLEKTERLEQLRILENGMTIGTCLVENVPISVDTEEDLKKAIKFCKKINKLGL</sequence>
<evidence type="ECO:0000255" key="1">
    <source>
        <dbReference type="HAMAP-Rule" id="MF_00057"/>
    </source>
</evidence>
<proteinExistence type="inferred from homology"/>
<reference key="1">
    <citation type="journal article" date="1998" name="Nature">
        <title>The genome sequence of Rickettsia prowazekii and the origin of mitochondria.</title>
        <authorList>
            <person name="Andersson S.G.E."/>
            <person name="Zomorodipour A."/>
            <person name="Andersson J.O."/>
            <person name="Sicheritz-Ponten T."/>
            <person name="Alsmark U.C.M."/>
            <person name="Podowski R.M."/>
            <person name="Naeslund A.K."/>
            <person name="Eriksson A.-S."/>
            <person name="Winkler H.H."/>
            <person name="Kurland C.G."/>
        </authorList>
    </citation>
    <scope>NUCLEOTIDE SEQUENCE [LARGE SCALE GENOMIC DNA]</scope>
    <source>
        <strain>Madrid E</strain>
    </source>
</reference>
<organism>
    <name type="scientific">Rickettsia prowazekii (strain Madrid E)</name>
    <dbReference type="NCBI Taxonomy" id="272947"/>
    <lineage>
        <taxon>Bacteria</taxon>
        <taxon>Pseudomonadati</taxon>
        <taxon>Pseudomonadota</taxon>
        <taxon>Alphaproteobacteria</taxon>
        <taxon>Rickettsiales</taxon>
        <taxon>Rickettsiaceae</taxon>
        <taxon>Rickettsieae</taxon>
        <taxon>Rickettsia</taxon>
        <taxon>typhus group</taxon>
    </lineage>
</organism>
<protein>
    <recommendedName>
        <fullName evidence="1">3-deoxy-manno-octulosonate cytidylyltransferase</fullName>
        <ecNumber evidence="1">2.7.7.38</ecNumber>
    </recommendedName>
    <alternativeName>
        <fullName evidence="1">CMP-2-keto-3-deoxyoctulosonic acid synthase</fullName>
        <shortName evidence="1">CKS</shortName>
        <shortName evidence="1">CMP-KDO synthase</shortName>
    </alternativeName>
</protein>